<accession>Q8ZD46</accession>
<accession>Q0WDE5</accession>
<accession>Q74SY5</accession>
<accession>Q7CJB5</accession>
<keyword id="KW-0012">Acyltransferase</keyword>
<keyword id="KW-0963">Cytoplasm</keyword>
<keyword id="KW-0276">Fatty acid metabolism</keyword>
<keyword id="KW-0442">Lipid degradation</keyword>
<keyword id="KW-0443">Lipid metabolism</keyword>
<keyword id="KW-1185">Reference proteome</keyword>
<keyword id="KW-0808">Transferase</keyword>
<proteinExistence type="inferred from homology"/>
<gene>
    <name evidence="1" type="primary">fadI</name>
    <name type="ordered locus">YPO2746</name>
    <name type="ordered locus">y1579</name>
    <name type="ordered locus">YP_2418</name>
</gene>
<evidence type="ECO:0000255" key="1">
    <source>
        <dbReference type="HAMAP-Rule" id="MF_01618"/>
    </source>
</evidence>
<feature type="chain" id="PRO_0000206454" description="3-ketoacyl-CoA thiolase">
    <location>
        <begin position="1"/>
        <end position="436"/>
    </location>
</feature>
<feature type="active site" description="Acyl-thioester intermediate" evidence="1">
    <location>
        <position position="99"/>
    </location>
</feature>
<feature type="active site" description="Proton acceptor" evidence="1">
    <location>
        <position position="392"/>
    </location>
</feature>
<feature type="active site" description="Proton acceptor" evidence="1">
    <location>
        <position position="422"/>
    </location>
</feature>
<name>FADI_YERPE</name>
<comment type="function">
    <text evidence="1">Catalyzes the final step of fatty acid oxidation in which acetyl-CoA is released and the CoA ester of a fatty acid two carbons shorter is formed.</text>
</comment>
<comment type="catalytic activity">
    <reaction evidence="1">
        <text>an acyl-CoA + acetyl-CoA = a 3-oxoacyl-CoA + CoA</text>
        <dbReference type="Rhea" id="RHEA:21564"/>
        <dbReference type="ChEBI" id="CHEBI:57287"/>
        <dbReference type="ChEBI" id="CHEBI:57288"/>
        <dbReference type="ChEBI" id="CHEBI:58342"/>
        <dbReference type="ChEBI" id="CHEBI:90726"/>
        <dbReference type="EC" id="2.3.1.16"/>
    </reaction>
</comment>
<comment type="pathway">
    <text evidence="1">Lipid metabolism; fatty acid beta-oxidation.</text>
</comment>
<comment type="subunit">
    <text evidence="1">Heterotetramer of two alpha chains (FadJ) and two beta chains (FadI).</text>
</comment>
<comment type="subcellular location">
    <subcellularLocation>
        <location evidence="1">Cytoplasm</location>
    </subcellularLocation>
</comment>
<comment type="similarity">
    <text evidence="1">Belongs to the thiolase-like superfamily. Thiolase family.</text>
</comment>
<reference key="1">
    <citation type="journal article" date="2001" name="Nature">
        <title>Genome sequence of Yersinia pestis, the causative agent of plague.</title>
        <authorList>
            <person name="Parkhill J."/>
            <person name="Wren B.W."/>
            <person name="Thomson N.R."/>
            <person name="Titball R.W."/>
            <person name="Holden M.T.G."/>
            <person name="Prentice M.B."/>
            <person name="Sebaihia M."/>
            <person name="James K.D."/>
            <person name="Churcher C.M."/>
            <person name="Mungall K.L."/>
            <person name="Baker S."/>
            <person name="Basham D."/>
            <person name="Bentley S.D."/>
            <person name="Brooks K."/>
            <person name="Cerdeno-Tarraga A.-M."/>
            <person name="Chillingworth T."/>
            <person name="Cronin A."/>
            <person name="Davies R.M."/>
            <person name="Davis P."/>
            <person name="Dougan G."/>
            <person name="Feltwell T."/>
            <person name="Hamlin N."/>
            <person name="Holroyd S."/>
            <person name="Jagels K."/>
            <person name="Karlyshev A.V."/>
            <person name="Leather S."/>
            <person name="Moule S."/>
            <person name="Oyston P.C.F."/>
            <person name="Quail M.A."/>
            <person name="Rutherford K.M."/>
            <person name="Simmonds M."/>
            <person name="Skelton J."/>
            <person name="Stevens K."/>
            <person name="Whitehead S."/>
            <person name="Barrell B.G."/>
        </authorList>
    </citation>
    <scope>NUCLEOTIDE SEQUENCE [LARGE SCALE GENOMIC DNA]</scope>
    <source>
        <strain>CO-92 / Biovar Orientalis</strain>
    </source>
</reference>
<reference key="2">
    <citation type="journal article" date="2002" name="J. Bacteriol.">
        <title>Genome sequence of Yersinia pestis KIM.</title>
        <authorList>
            <person name="Deng W."/>
            <person name="Burland V."/>
            <person name="Plunkett G. III"/>
            <person name="Boutin A."/>
            <person name="Mayhew G.F."/>
            <person name="Liss P."/>
            <person name="Perna N.T."/>
            <person name="Rose D.J."/>
            <person name="Mau B."/>
            <person name="Zhou S."/>
            <person name="Schwartz D.C."/>
            <person name="Fetherston J.D."/>
            <person name="Lindler L.E."/>
            <person name="Brubaker R.R."/>
            <person name="Plano G.V."/>
            <person name="Straley S.C."/>
            <person name="McDonough K.A."/>
            <person name="Nilles M.L."/>
            <person name="Matson J.S."/>
            <person name="Blattner F.R."/>
            <person name="Perry R.D."/>
        </authorList>
    </citation>
    <scope>NUCLEOTIDE SEQUENCE [LARGE SCALE GENOMIC DNA]</scope>
    <source>
        <strain>KIM10+ / Biovar Mediaevalis</strain>
    </source>
</reference>
<reference key="3">
    <citation type="journal article" date="2004" name="DNA Res.">
        <title>Complete genome sequence of Yersinia pestis strain 91001, an isolate avirulent to humans.</title>
        <authorList>
            <person name="Song Y."/>
            <person name="Tong Z."/>
            <person name="Wang J."/>
            <person name="Wang L."/>
            <person name="Guo Z."/>
            <person name="Han Y."/>
            <person name="Zhang J."/>
            <person name="Pei D."/>
            <person name="Zhou D."/>
            <person name="Qin H."/>
            <person name="Pang X."/>
            <person name="Han Y."/>
            <person name="Zhai J."/>
            <person name="Li M."/>
            <person name="Cui B."/>
            <person name="Qi Z."/>
            <person name="Jin L."/>
            <person name="Dai R."/>
            <person name="Chen F."/>
            <person name="Li S."/>
            <person name="Ye C."/>
            <person name="Du Z."/>
            <person name="Lin W."/>
            <person name="Wang J."/>
            <person name="Yu J."/>
            <person name="Yang H."/>
            <person name="Wang J."/>
            <person name="Huang P."/>
            <person name="Yang R."/>
        </authorList>
    </citation>
    <scope>NUCLEOTIDE SEQUENCE [LARGE SCALE GENOMIC DNA]</scope>
    <source>
        <strain>91001 / Biovar Mediaevalis</strain>
    </source>
</reference>
<dbReference type="EC" id="2.3.1.16" evidence="1"/>
<dbReference type="EMBL" id="AL590842">
    <property type="protein sequence ID" value="CAL21365.1"/>
    <property type="molecule type" value="Genomic_DNA"/>
</dbReference>
<dbReference type="EMBL" id="AE009952">
    <property type="protein sequence ID" value="AAM85148.1"/>
    <property type="molecule type" value="Genomic_DNA"/>
</dbReference>
<dbReference type="EMBL" id="AE017042">
    <property type="protein sequence ID" value="AAS62623.1"/>
    <property type="molecule type" value="Genomic_DNA"/>
</dbReference>
<dbReference type="PIR" id="AB0335">
    <property type="entry name" value="AB0335"/>
</dbReference>
<dbReference type="RefSeq" id="WP_002209704.1">
    <property type="nucleotide sequence ID" value="NZ_WUCM01000012.1"/>
</dbReference>
<dbReference type="RefSeq" id="YP_002347693.1">
    <property type="nucleotide sequence ID" value="NC_003143.1"/>
</dbReference>
<dbReference type="SMR" id="Q8ZD46"/>
<dbReference type="STRING" id="214092.YPO2746"/>
<dbReference type="PaxDb" id="214092-YPO2746"/>
<dbReference type="DNASU" id="1146526"/>
<dbReference type="EnsemblBacteria" id="AAS62623">
    <property type="protein sequence ID" value="AAS62623"/>
    <property type="gene ID" value="YP_2418"/>
</dbReference>
<dbReference type="GeneID" id="57975943"/>
<dbReference type="KEGG" id="ype:YPO2746"/>
<dbReference type="KEGG" id="ypk:y1579"/>
<dbReference type="KEGG" id="ypm:YP_2418"/>
<dbReference type="PATRIC" id="fig|1028802.3.peg.343"/>
<dbReference type="eggNOG" id="COG0183">
    <property type="taxonomic scope" value="Bacteria"/>
</dbReference>
<dbReference type="HOGENOM" id="CLU_031026_2_0_6"/>
<dbReference type="OMA" id="MTAFPEP"/>
<dbReference type="OrthoDB" id="8951704at2"/>
<dbReference type="UniPathway" id="UPA00659"/>
<dbReference type="Proteomes" id="UP000000815">
    <property type="component" value="Chromosome"/>
</dbReference>
<dbReference type="Proteomes" id="UP000001019">
    <property type="component" value="Chromosome"/>
</dbReference>
<dbReference type="Proteomes" id="UP000002490">
    <property type="component" value="Chromosome"/>
</dbReference>
<dbReference type="GO" id="GO:0005829">
    <property type="term" value="C:cytosol"/>
    <property type="evidence" value="ECO:0000318"/>
    <property type="project" value="GO_Central"/>
</dbReference>
<dbReference type="GO" id="GO:0003985">
    <property type="term" value="F:acetyl-CoA C-acetyltransferase activity"/>
    <property type="evidence" value="ECO:0000318"/>
    <property type="project" value="GO_Central"/>
</dbReference>
<dbReference type="GO" id="GO:0006635">
    <property type="term" value="P:fatty acid beta-oxidation"/>
    <property type="evidence" value="ECO:0007669"/>
    <property type="project" value="UniProtKB-UniRule"/>
</dbReference>
<dbReference type="CDD" id="cd00751">
    <property type="entry name" value="thiolase"/>
    <property type="match status" value="1"/>
</dbReference>
<dbReference type="FunFam" id="3.40.47.10:FF:000011">
    <property type="entry name" value="3-ketoacyl-CoA thiolase"/>
    <property type="match status" value="1"/>
</dbReference>
<dbReference type="Gene3D" id="3.40.47.10">
    <property type="match status" value="1"/>
</dbReference>
<dbReference type="HAMAP" id="MF_01618">
    <property type="entry name" value="FadI"/>
    <property type="match status" value="1"/>
</dbReference>
<dbReference type="InterPro" id="IPR012806">
    <property type="entry name" value="Ac-CoA_C-AcTrfase_FadI"/>
</dbReference>
<dbReference type="InterPro" id="IPR002155">
    <property type="entry name" value="Thiolase"/>
</dbReference>
<dbReference type="InterPro" id="IPR016039">
    <property type="entry name" value="Thiolase-like"/>
</dbReference>
<dbReference type="InterPro" id="IPR020615">
    <property type="entry name" value="Thiolase_acyl_enz_int_AS"/>
</dbReference>
<dbReference type="InterPro" id="IPR020610">
    <property type="entry name" value="Thiolase_AS"/>
</dbReference>
<dbReference type="InterPro" id="IPR020617">
    <property type="entry name" value="Thiolase_C"/>
</dbReference>
<dbReference type="InterPro" id="IPR020613">
    <property type="entry name" value="Thiolase_CS"/>
</dbReference>
<dbReference type="InterPro" id="IPR020616">
    <property type="entry name" value="Thiolase_N"/>
</dbReference>
<dbReference type="NCBIfam" id="TIGR01930">
    <property type="entry name" value="AcCoA-C-Actrans"/>
    <property type="match status" value="1"/>
</dbReference>
<dbReference type="NCBIfam" id="TIGR02446">
    <property type="entry name" value="FadI"/>
    <property type="match status" value="1"/>
</dbReference>
<dbReference type="NCBIfam" id="NF006516">
    <property type="entry name" value="PRK08963.1"/>
    <property type="match status" value="1"/>
</dbReference>
<dbReference type="PANTHER" id="PTHR18919:SF107">
    <property type="entry name" value="ACETYL-COA ACETYLTRANSFERASE, CYTOSOLIC"/>
    <property type="match status" value="1"/>
</dbReference>
<dbReference type="PANTHER" id="PTHR18919">
    <property type="entry name" value="ACETYL-COA C-ACYLTRANSFERASE"/>
    <property type="match status" value="1"/>
</dbReference>
<dbReference type="Pfam" id="PF02803">
    <property type="entry name" value="Thiolase_C"/>
    <property type="match status" value="1"/>
</dbReference>
<dbReference type="Pfam" id="PF00108">
    <property type="entry name" value="Thiolase_N"/>
    <property type="match status" value="1"/>
</dbReference>
<dbReference type="PIRSF" id="PIRSF000429">
    <property type="entry name" value="Ac-CoA_Ac_transf"/>
    <property type="match status" value="1"/>
</dbReference>
<dbReference type="SUPFAM" id="SSF53901">
    <property type="entry name" value="Thiolase-like"/>
    <property type="match status" value="2"/>
</dbReference>
<dbReference type="PROSITE" id="PS00098">
    <property type="entry name" value="THIOLASE_1"/>
    <property type="match status" value="1"/>
</dbReference>
<dbReference type="PROSITE" id="PS00737">
    <property type="entry name" value="THIOLASE_2"/>
    <property type="match status" value="1"/>
</dbReference>
<dbReference type="PROSITE" id="PS00099">
    <property type="entry name" value="THIOLASE_3"/>
    <property type="match status" value="1"/>
</dbReference>
<protein>
    <recommendedName>
        <fullName evidence="1">3-ketoacyl-CoA thiolase</fullName>
        <ecNumber evidence="1">2.3.1.16</ecNumber>
    </recommendedName>
    <alternativeName>
        <fullName evidence="1">ACSs</fullName>
    </alternativeName>
    <alternativeName>
        <fullName evidence="1">Acetyl-CoA acyltransferase</fullName>
    </alternativeName>
    <alternativeName>
        <fullName evidence="1">Acyl-CoA ligase</fullName>
    </alternativeName>
    <alternativeName>
        <fullName evidence="1">Beta-ketothiolase</fullName>
    </alternativeName>
    <alternativeName>
        <fullName evidence="1">Fatty acid oxidation complex subunit beta</fullName>
    </alternativeName>
</protein>
<organism>
    <name type="scientific">Yersinia pestis</name>
    <dbReference type="NCBI Taxonomy" id="632"/>
    <lineage>
        <taxon>Bacteria</taxon>
        <taxon>Pseudomonadati</taxon>
        <taxon>Pseudomonadota</taxon>
        <taxon>Gammaproteobacteria</taxon>
        <taxon>Enterobacterales</taxon>
        <taxon>Yersiniaceae</taxon>
        <taxon>Yersinia</taxon>
    </lineage>
</organism>
<sequence length="436" mass="46311">MSKPLPLVTRQGDRIVIVNGLRTPFAKQATAYHGVPAVDLGKIVVSELLARSGISSELIDQLVFGQVVQMPEAPNIAREIVLGTGMSVHTDAYSVSRACATSFQAVANVAESIIAGSVDIAIAGGADSSSVLPIGVSKALARTLVDANKARSLSQKLKLFSRLRLRDLLPVAPAVAEYSTGLRMGDTAEQMAKTYGISREDQDALALRSHQLAAEAWQQGWLHDEVMTAYIPPYREAIIEDNNIRKDSTLAQYAKLRPAFDRQHGSVTAANSTPLTDGAAAVLMMSESKAKALGLPPLGYLRSFAFSAIDVWQDMLLGPSYATPLALDRAGITLADLTLIDMHEAFAAQTLANLKMFASDTFAREKLGRSQAIGEVDMSKFNVLGGSIAYGHPFAATGARMITQTLNELRRRGGGLGLTTACAAGGLGAAMILEVE</sequence>